<name>IFN17_HUMAN</name>
<evidence type="ECO:0000250" key="1"/>
<evidence type="ECO:0000269" key="2">
    <source>
    </source>
</evidence>
<evidence type="ECO:0000269" key="3">
    <source>
    </source>
</evidence>
<evidence type="ECO:0000269" key="4">
    <source>
    </source>
</evidence>
<evidence type="ECO:0000269" key="5">
    <source>
    </source>
</evidence>
<evidence type="ECO:0000269" key="6">
    <source>
    </source>
</evidence>
<evidence type="ECO:0000305" key="7"/>
<dbReference type="EMBL" id="V00532">
    <property type="protein sequence ID" value="CAA23793.1"/>
    <property type="molecule type" value="Genomic_DNA"/>
</dbReference>
<dbReference type="EMBL" id="M11026">
    <property type="protein sequence ID" value="AAA52725.1"/>
    <property type="molecule type" value="mRNA"/>
</dbReference>
<dbReference type="EMBL" id="M38289">
    <property type="protein sequence ID" value="AAA59165.1"/>
    <property type="molecule type" value="mRNA"/>
</dbReference>
<dbReference type="EMBL" id="AL162420">
    <property type="status" value="NOT_ANNOTATED_CDS"/>
    <property type="molecule type" value="Genomic_DNA"/>
</dbReference>
<dbReference type="EMBL" id="CH471071">
    <property type="protein sequence ID" value="EAW58617.1"/>
    <property type="molecule type" value="Genomic_DNA"/>
</dbReference>
<dbReference type="EMBL" id="BC096732">
    <property type="protein sequence ID" value="AAH96732.1"/>
    <property type="molecule type" value="mRNA"/>
</dbReference>
<dbReference type="EMBL" id="BC098355">
    <property type="protein sequence ID" value="AAH98355.1"/>
    <property type="molecule type" value="mRNA"/>
</dbReference>
<dbReference type="EMBL" id="M71246">
    <property type="protein sequence ID" value="AAA52713.1"/>
    <property type="molecule type" value="mRNA"/>
</dbReference>
<dbReference type="CCDS" id="CCDS6500.1"/>
<dbReference type="PIR" id="A01835">
    <property type="entry name" value="IVHUA9"/>
</dbReference>
<dbReference type="PIR" id="D42753">
    <property type="entry name" value="D42753"/>
</dbReference>
<dbReference type="PIR" id="I51970">
    <property type="entry name" value="I51970"/>
</dbReference>
<dbReference type="PIR" id="I56314">
    <property type="entry name" value="I56314"/>
</dbReference>
<dbReference type="RefSeq" id="NP_067091.1">
    <property type="nucleotide sequence ID" value="NM_021268.2"/>
</dbReference>
<dbReference type="SMR" id="P01571"/>
<dbReference type="BioGRID" id="109673">
    <property type="interactions" value="6"/>
</dbReference>
<dbReference type="ComplexPortal" id="CPX-6005">
    <property type="entry name" value="Interferon alpha receptor-ligand complex, IFNA17 variant"/>
</dbReference>
<dbReference type="FunCoup" id="P01571">
    <property type="interactions" value="959"/>
</dbReference>
<dbReference type="IntAct" id="P01571">
    <property type="interactions" value="7"/>
</dbReference>
<dbReference type="STRING" id="9606.ENSP00000411940"/>
<dbReference type="ChEMBL" id="CHEMBL3856161"/>
<dbReference type="BioMuta" id="IFNA17"/>
<dbReference type="DMDM" id="585316"/>
<dbReference type="MassIVE" id="P01571"/>
<dbReference type="PaxDb" id="9606-ENSP00000411940"/>
<dbReference type="PeptideAtlas" id="P01571"/>
<dbReference type="ABCD" id="P01571">
    <property type="antibodies" value="1 sequenced antibody"/>
</dbReference>
<dbReference type="Antibodypedia" id="24861">
    <property type="antibodies" value="67 antibodies from 16 providers"/>
</dbReference>
<dbReference type="DNASU" id="3451"/>
<dbReference type="Ensembl" id="ENST00000413767.2">
    <property type="protein sequence ID" value="ENSP00000411940.2"/>
    <property type="gene ID" value="ENSG00000234829.4"/>
</dbReference>
<dbReference type="GeneID" id="3451"/>
<dbReference type="KEGG" id="hsa:3451"/>
<dbReference type="MANE-Select" id="ENST00000413767.2">
    <property type="protein sequence ID" value="ENSP00000411940.2"/>
    <property type="RefSeq nucleotide sequence ID" value="NM_021268.2"/>
    <property type="RefSeq protein sequence ID" value="NP_067091.1"/>
</dbReference>
<dbReference type="UCSC" id="uc003zos.1">
    <property type="organism name" value="human"/>
</dbReference>
<dbReference type="AGR" id="HGNC:5422"/>
<dbReference type="CTD" id="3451"/>
<dbReference type="DisGeNET" id="3451"/>
<dbReference type="GeneCards" id="IFNA17"/>
<dbReference type="HGNC" id="HGNC:5422">
    <property type="gene designation" value="IFNA17"/>
</dbReference>
<dbReference type="HPA" id="ENSG00000234829">
    <property type="expression patterns" value="Not detected"/>
</dbReference>
<dbReference type="MIM" id="147583">
    <property type="type" value="gene"/>
</dbReference>
<dbReference type="neXtProt" id="NX_P01571"/>
<dbReference type="OpenTargets" id="ENSG00000234829"/>
<dbReference type="PharmGKB" id="PA29661"/>
<dbReference type="VEuPathDB" id="HostDB:ENSG00000234829"/>
<dbReference type="eggNOG" id="ENOG502SQAC">
    <property type="taxonomic scope" value="Eukaryota"/>
</dbReference>
<dbReference type="GeneTree" id="ENSGT01000000214430"/>
<dbReference type="InParanoid" id="P01571"/>
<dbReference type="OMA" id="WDENTIA"/>
<dbReference type="OrthoDB" id="9526363at2759"/>
<dbReference type="PAN-GO" id="P01571">
    <property type="GO annotations" value="12 GO annotations based on evolutionary models"/>
</dbReference>
<dbReference type="PhylomeDB" id="P01571"/>
<dbReference type="TreeFam" id="TF336177"/>
<dbReference type="PathwayCommons" id="P01571"/>
<dbReference type="Reactome" id="R-HSA-909733">
    <property type="pathway name" value="Interferon alpha/beta signaling"/>
</dbReference>
<dbReference type="Reactome" id="R-HSA-912694">
    <property type="pathway name" value="Regulation of IFNA/IFNB signaling"/>
</dbReference>
<dbReference type="Reactome" id="R-HSA-933541">
    <property type="pathway name" value="TRAF6 mediated IRF7 activation"/>
</dbReference>
<dbReference type="Reactome" id="R-HSA-9705671">
    <property type="pathway name" value="SARS-CoV-2 activates/modulates innate and adaptive immune responses"/>
</dbReference>
<dbReference type="Reactome" id="R-HSA-983231">
    <property type="pathway name" value="Factors involved in megakaryocyte development and platelet production"/>
</dbReference>
<dbReference type="Reactome" id="R-HSA-9833109">
    <property type="pathway name" value="Evasion by RSV of host interferon responses"/>
</dbReference>
<dbReference type="SignaLink" id="P01571"/>
<dbReference type="BioGRID-ORCS" id="3451">
    <property type="hits" value="12 hits in 1041 CRISPR screens"/>
</dbReference>
<dbReference type="GeneWiki" id="IFNA17"/>
<dbReference type="GenomeRNAi" id="3451"/>
<dbReference type="Pharos" id="P01571">
    <property type="development level" value="Tbio"/>
</dbReference>
<dbReference type="PRO" id="PR:P01571"/>
<dbReference type="Proteomes" id="UP000005640">
    <property type="component" value="Chromosome 9"/>
</dbReference>
<dbReference type="RNAct" id="P01571">
    <property type="molecule type" value="protein"/>
</dbReference>
<dbReference type="Bgee" id="ENSG00000234829">
    <property type="expression patterns" value="Expressed in ganglionic eminence"/>
</dbReference>
<dbReference type="GO" id="GO:0005576">
    <property type="term" value="C:extracellular region"/>
    <property type="evidence" value="ECO:0000304"/>
    <property type="project" value="Reactome"/>
</dbReference>
<dbReference type="GO" id="GO:0005615">
    <property type="term" value="C:extracellular space"/>
    <property type="evidence" value="ECO:0000318"/>
    <property type="project" value="GO_Central"/>
</dbReference>
<dbReference type="GO" id="GO:0005125">
    <property type="term" value="F:cytokine activity"/>
    <property type="evidence" value="ECO:0000318"/>
    <property type="project" value="GO_Central"/>
</dbReference>
<dbReference type="GO" id="GO:0005132">
    <property type="term" value="F:type I interferon receptor binding"/>
    <property type="evidence" value="ECO:0000318"/>
    <property type="project" value="GO_Central"/>
</dbReference>
<dbReference type="GO" id="GO:0002250">
    <property type="term" value="P:adaptive immune response"/>
    <property type="evidence" value="ECO:0000318"/>
    <property type="project" value="GO_Central"/>
</dbReference>
<dbReference type="GO" id="GO:0002312">
    <property type="term" value="P:B cell activation involved in immune response"/>
    <property type="evidence" value="ECO:0000318"/>
    <property type="project" value="GO_Central"/>
</dbReference>
<dbReference type="GO" id="GO:0098586">
    <property type="term" value="P:cellular response to virus"/>
    <property type="evidence" value="ECO:0000303"/>
    <property type="project" value="ComplexPortal"/>
</dbReference>
<dbReference type="GO" id="GO:0051607">
    <property type="term" value="P:defense response to virus"/>
    <property type="evidence" value="ECO:0007669"/>
    <property type="project" value="UniProtKB-KW"/>
</dbReference>
<dbReference type="GO" id="GO:0006959">
    <property type="term" value="P:humoral immune response"/>
    <property type="evidence" value="ECO:0000318"/>
    <property type="project" value="GO_Central"/>
</dbReference>
<dbReference type="GO" id="GO:0002323">
    <property type="term" value="P:natural killer cell activation involved in immune response"/>
    <property type="evidence" value="ECO:0000318"/>
    <property type="project" value="GO_Central"/>
</dbReference>
<dbReference type="GO" id="GO:0043330">
    <property type="term" value="P:response to exogenous dsRNA"/>
    <property type="evidence" value="ECO:0000318"/>
    <property type="project" value="GO_Central"/>
</dbReference>
<dbReference type="GO" id="GO:0009615">
    <property type="term" value="P:response to virus"/>
    <property type="evidence" value="ECO:0000304"/>
    <property type="project" value="ProtInc"/>
</dbReference>
<dbReference type="GO" id="GO:0002286">
    <property type="term" value="P:T cell activation involved in immune response"/>
    <property type="evidence" value="ECO:0000318"/>
    <property type="project" value="GO_Central"/>
</dbReference>
<dbReference type="GO" id="GO:0060337">
    <property type="term" value="P:type I interferon-mediated signaling pathway"/>
    <property type="evidence" value="ECO:0000318"/>
    <property type="project" value="GO_Central"/>
</dbReference>
<dbReference type="CDD" id="cd00095">
    <property type="entry name" value="IFab"/>
    <property type="match status" value="1"/>
</dbReference>
<dbReference type="FunFam" id="1.20.1250.10:FF:000001">
    <property type="entry name" value="Interferon alpha"/>
    <property type="match status" value="1"/>
</dbReference>
<dbReference type="Gene3D" id="1.20.1250.10">
    <property type="match status" value="1"/>
</dbReference>
<dbReference type="InterPro" id="IPR009079">
    <property type="entry name" value="4_helix_cytokine-like_core"/>
</dbReference>
<dbReference type="InterPro" id="IPR000471">
    <property type="entry name" value="Interferon_alpha/beta/delta"/>
</dbReference>
<dbReference type="PANTHER" id="PTHR11691:SF66">
    <property type="entry name" value="INTERFERON ALPHA-10-RELATED"/>
    <property type="match status" value="1"/>
</dbReference>
<dbReference type="PANTHER" id="PTHR11691">
    <property type="entry name" value="TYPE I INTERFERON"/>
    <property type="match status" value="1"/>
</dbReference>
<dbReference type="Pfam" id="PF00143">
    <property type="entry name" value="Interferon"/>
    <property type="match status" value="1"/>
</dbReference>
<dbReference type="PRINTS" id="PR00266">
    <property type="entry name" value="INTERFERONAB"/>
</dbReference>
<dbReference type="SMART" id="SM00076">
    <property type="entry name" value="IFabd"/>
    <property type="match status" value="1"/>
</dbReference>
<dbReference type="SUPFAM" id="SSF47266">
    <property type="entry name" value="4-helical cytokines"/>
    <property type="match status" value="1"/>
</dbReference>
<dbReference type="PROSITE" id="PS00252">
    <property type="entry name" value="INTERFERON_A_B_D"/>
    <property type="match status" value="1"/>
</dbReference>
<organism>
    <name type="scientific">Homo sapiens</name>
    <name type="common">Human</name>
    <dbReference type="NCBI Taxonomy" id="9606"/>
    <lineage>
        <taxon>Eukaryota</taxon>
        <taxon>Metazoa</taxon>
        <taxon>Chordata</taxon>
        <taxon>Craniata</taxon>
        <taxon>Vertebrata</taxon>
        <taxon>Euteleostomi</taxon>
        <taxon>Mammalia</taxon>
        <taxon>Eutheria</taxon>
        <taxon>Euarchontoglires</taxon>
        <taxon>Primates</taxon>
        <taxon>Haplorrhini</taxon>
        <taxon>Catarrhini</taxon>
        <taxon>Hominidae</taxon>
        <taxon>Homo</taxon>
    </lineage>
</organism>
<proteinExistence type="evidence at protein level"/>
<sequence length="189" mass="21728">MALSFSLLMAVLVLSYKSICSLGCDLPQTHSLGNRRALILLAQMGRISPFSCLKDRHDFGLPQEEFDGNQFQKTQAISVLHEMIQQTFNLFSTEDSSAAWEQSLLEKFSTELYQQLNNLEACVIQEVGMEETPLMNEDSILAVRKYFQRITLYLTEKKYSPCAWEVVRAEIMRSLSFSTNLQKILRRKD</sequence>
<feature type="signal peptide" evidence="2 5">
    <location>
        <begin position="1"/>
        <end position="23"/>
    </location>
</feature>
<feature type="chain" id="PRO_0000016369" description="Interferon alpha-17">
    <location>
        <begin position="24"/>
        <end position="189"/>
    </location>
</feature>
<feature type="disulfide bond" evidence="1">
    <location>
        <begin position="24"/>
        <end position="122"/>
    </location>
</feature>
<feature type="disulfide bond" evidence="1">
    <location>
        <begin position="52"/>
        <end position="162"/>
    </location>
</feature>
<feature type="sequence variant" id="VAR_013020" description="In dbSNP:rs9298814." evidence="3 4 6">
    <original>I</original>
    <variation>R</variation>
    <location>
        <position position="184"/>
    </location>
</feature>
<feature type="sequence conflict" description="In Ref. 1; CAA23793." evidence="7" ref="1">
    <original>H</original>
    <variation>P</variation>
    <location>
        <position position="57"/>
    </location>
</feature>
<feature type="sequence conflict" description="In Ref. 8; AA sequence." evidence="7" ref="8">
    <original>G</original>
    <variation>E</variation>
    <location>
        <position position="60"/>
    </location>
</feature>
<feature type="sequence conflict" description="In Ref. 3; AAA59165." evidence="7" ref="3">
    <original>S</original>
    <variation>P</variation>
    <location>
        <position position="78"/>
    </location>
</feature>
<gene>
    <name type="primary">IFNA17</name>
</gene>
<protein>
    <recommendedName>
        <fullName>Interferon alpha-17</fullName>
        <shortName>IFN-alpha-17</shortName>
    </recommendedName>
    <alternativeName>
        <fullName>Interferon alpha-88</fullName>
    </alternativeName>
    <alternativeName>
        <fullName>Interferon alpha-I'</fullName>
        <shortName>LeIF I</shortName>
    </alternativeName>
    <alternativeName>
        <fullName>Interferon alpha-T</fullName>
    </alternativeName>
</protein>
<comment type="function">
    <text evidence="2">Produced by macrophages, IFN-alpha have antiviral activities. Interferon stimulates the production of two enzymes: a protein kinase and an oligoadenylate synthetase.</text>
</comment>
<comment type="subcellular location">
    <subcellularLocation>
        <location>Secreted</location>
    </subcellularLocation>
</comment>
<comment type="similarity">
    <text evidence="7">Belongs to the alpha/beta interferon family.</text>
</comment>
<reference key="1">
    <citation type="journal article" date="1981" name="Science">
        <title>DNA sequence of two closely linked human leukocyte interferon genes.</title>
        <authorList>
            <person name="Lawn R.M."/>
            <person name="Adelman J."/>
            <person name="Dull T.J."/>
            <person name="Gross M."/>
            <person name="Goeddel D.V."/>
            <person name="Ullrich A."/>
        </authorList>
    </citation>
    <scope>NUCLEOTIDE SEQUENCE [GENOMIC DNA]</scope>
</reference>
<reference key="2">
    <citation type="journal article" date="1985" name="DNA">
        <title>Efficient expression in Escherichia coli of two species of human interferon-alpha and their hybrid molecules.</title>
        <authorList>
            <person name="Mizoguchi J."/>
            <person name="Pitha P.M."/>
            <person name="Raj N.B.K."/>
        </authorList>
    </citation>
    <scope>NUCLEOTIDE SEQUENCE [MRNA]</scope>
</reference>
<reference key="3">
    <citation type="journal article" date="1986" name="Antibiot. Med. Biotekhnol.">
        <title>[Cloning and the determination of the nucleotide sequences in 2 genes of human leukocyte interferons].</title>
        <authorList>
            <person name="Saveliev V.I."/>
            <person name="Zlochevsky M.L."/>
            <person name="Sorokin A.V."/>
            <person name="Naroditskaya V.A."/>
            <person name="Bolotin A.P."/>
            <person name="Demyanova N.G."/>
            <person name="Kozlov Y.I."/>
            <person name="Neznanov N.S."/>
            <person name="Gazaryan K.G."/>
            <person name="Monastyrskaya G.S."/>
            <person name="Sverdlov E.D."/>
        </authorList>
    </citation>
    <scope>NUCLEOTIDE SEQUENCE [MRNA]</scope>
    <scope>VARIANT ARG-184</scope>
</reference>
<reference key="4">
    <citation type="journal article" date="2004" name="Nature">
        <title>DNA sequence and analysis of human chromosome 9.</title>
        <authorList>
            <person name="Humphray S.J."/>
            <person name="Oliver K."/>
            <person name="Hunt A.R."/>
            <person name="Plumb R.W."/>
            <person name="Loveland J.E."/>
            <person name="Howe K.L."/>
            <person name="Andrews T.D."/>
            <person name="Searle S."/>
            <person name="Hunt S.E."/>
            <person name="Scott C.E."/>
            <person name="Jones M.C."/>
            <person name="Ainscough R."/>
            <person name="Almeida J.P."/>
            <person name="Ambrose K.D."/>
            <person name="Ashwell R.I.S."/>
            <person name="Babbage A.K."/>
            <person name="Babbage S."/>
            <person name="Bagguley C.L."/>
            <person name="Bailey J."/>
            <person name="Banerjee R."/>
            <person name="Barker D.J."/>
            <person name="Barlow K.F."/>
            <person name="Bates K."/>
            <person name="Beasley H."/>
            <person name="Beasley O."/>
            <person name="Bird C.P."/>
            <person name="Bray-Allen S."/>
            <person name="Brown A.J."/>
            <person name="Brown J.Y."/>
            <person name="Burford D."/>
            <person name="Burrill W."/>
            <person name="Burton J."/>
            <person name="Carder C."/>
            <person name="Carter N.P."/>
            <person name="Chapman J.C."/>
            <person name="Chen Y."/>
            <person name="Clarke G."/>
            <person name="Clark S.Y."/>
            <person name="Clee C.M."/>
            <person name="Clegg S."/>
            <person name="Collier R.E."/>
            <person name="Corby N."/>
            <person name="Crosier M."/>
            <person name="Cummings A.T."/>
            <person name="Davies J."/>
            <person name="Dhami P."/>
            <person name="Dunn M."/>
            <person name="Dutta I."/>
            <person name="Dyer L.W."/>
            <person name="Earthrowl M.E."/>
            <person name="Faulkner L."/>
            <person name="Fleming C.J."/>
            <person name="Frankish A."/>
            <person name="Frankland J.A."/>
            <person name="French L."/>
            <person name="Fricker D.G."/>
            <person name="Garner P."/>
            <person name="Garnett J."/>
            <person name="Ghori J."/>
            <person name="Gilbert J.G.R."/>
            <person name="Glison C."/>
            <person name="Grafham D.V."/>
            <person name="Gribble S."/>
            <person name="Griffiths C."/>
            <person name="Griffiths-Jones S."/>
            <person name="Grocock R."/>
            <person name="Guy J."/>
            <person name="Hall R.E."/>
            <person name="Hammond S."/>
            <person name="Harley J.L."/>
            <person name="Harrison E.S.I."/>
            <person name="Hart E.A."/>
            <person name="Heath P.D."/>
            <person name="Henderson C.D."/>
            <person name="Hopkins B.L."/>
            <person name="Howard P.J."/>
            <person name="Howden P.J."/>
            <person name="Huckle E."/>
            <person name="Johnson C."/>
            <person name="Johnson D."/>
            <person name="Joy A.A."/>
            <person name="Kay M."/>
            <person name="Keenan S."/>
            <person name="Kershaw J.K."/>
            <person name="Kimberley A.M."/>
            <person name="King A."/>
            <person name="Knights A."/>
            <person name="Laird G.K."/>
            <person name="Langford C."/>
            <person name="Lawlor S."/>
            <person name="Leongamornlert D.A."/>
            <person name="Leversha M."/>
            <person name="Lloyd C."/>
            <person name="Lloyd D.M."/>
            <person name="Lovell J."/>
            <person name="Martin S."/>
            <person name="Mashreghi-Mohammadi M."/>
            <person name="Matthews L."/>
            <person name="McLaren S."/>
            <person name="McLay K.E."/>
            <person name="McMurray A."/>
            <person name="Milne S."/>
            <person name="Nickerson T."/>
            <person name="Nisbett J."/>
            <person name="Nordsiek G."/>
            <person name="Pearce A.V."/>
            <person name="Peck A.I."/>
            <person name="Porter K.M."/>
            <person name="Pandian R."/>
            <person name="Pelan S."/>
            <person name="Phillimore B."/>
            <person name="Povey S."/>
            <person name="Ramsey Y."/>
            <person name="Rand V."/>
            <person name="Scharfe M."/>
            <person name="Sehra H.K."/>
            <person name="Shownkeen R."/>
            <person name="Sims S.K."/>
            <person name="Skuce C.D."/>
            <person name="Smith M."/>
            <person name="Steward C.A."/>
            <person name="Swarbreck D."/>
            <person name="Sycamore N."/>
            <person name="Tester J."/>
            <person name="Thorpe A."/>
            <person name="Tracey A."/>
            <person name="Tromans A."/>
            <person name="Thomas D.W."/>
            <person name="Wall M."/>
            <person name="Wallis J.M."/>
            <person name="West A.P."/>
            <person name="Whitehead S.L."/>
            <person name="Willey D.L."/>
            <person name="Williams S.A."/>
            <person name="Wilming L."/>
            <person name="Wray P.W."/>
            <person name="Young L."/>
            <person name="Ashurst J.L."/>
            <person name="Coulson A."/>
            <person name="Blocker H."/>
            <person name="Durbin R.M."/>
            <person name="Sulston J.E."/>
            <person name="Hubbard T."/>
            <person name="Jackson M.J."/>
            <person name="Bentley D.R."/>
            <person name="Beck S."/>
            <person name="Rogers J."/>
            <person name="Dunham I."/>
        </authorList>
    </citation>
    <scope>NUCLEOTIDE SEQUENCE [LARGE SCALE GENOMIC DNA]</scope>
</reference>
<reference key="5">
    <citation type="submission" date="2005-09" db="EMBL/GenBank/DDBJ databases">
        <authorList>
            <person name="Mural R.J."/>
            <person name="Istrail S."/>
            <person name="Sutton G.G."/>
            <person name="Florea L."/>
            <person name="Halpern A.L."/>
            <person name="Mobarry C.M."/>
            <person name="Lippert R."/>
            <person name="Walenz B."/>
            <person name="Shatkay H."/>
            <person name="Dew I."/>
            <person name="Miller J.R."/>
            <person name="Flanigan M.J."/>
            <person name="Edwards N.J."/>
            <person name="Bolanos R."/>
            <person name="Fasulo D."/>
            <person name="Halldorsson B.V."/>
            <person name="Hannenhalli S."/>
            <person name="Turner R."/>
            <person name="Yooseph S."/>
            <person name="Lu F."/>
            <person name="Nusskern D.R."/>
            <person name="Shue B.C."/>
            <person name="Zheng X.H."/>
            <person name="Zhong F."/>
            <person name="Delcher A.L."/>
            <person name="Huson D.H."/>
            <person name="Kravitz S.A."/>
            <person name="Mouchard L."/>
            <person name="Reinert K."/>
            <person name="Remington K.A."/>
            <person name="Clark A.G."/>
            <person name="Waterman M.S."/>
            <person name="Eichler E.E."/>
            <person name="Adams M.D."/>
            <person name="Hunkapiller M.W."/>
            <person name="Myers E.W."/>
            <person name="Venter J.C."/>
        </authorList>
    </citation>
    <scope>NUCLEOTIDE SEQUENCE [LARGE SCALE GENOMIC DNA]</scope>
</reference>
<reference key="6">
    <citation type="journal article" date="2004" name="Genome Res.">
        <title>The status, quality, and expansion of the NIH full-length cDNA project: the Mammalian Gene Collection (MGC).</title>
        <authorList>
            <consortium name="The MGC Project Team"/>
        </authorList>
    </citation>
    <scope>NUCLEOTIDE SEQUENCE [LARGE SCALE MRNA]</scope>
</reference>
<reference key="7">
    <citation type="journal article" date="1985" name="J. Interferon Res.">
        <title>Differential expression of interferon genes in a substrain of Namalwa cells.</title>
        <authorList>
            <person name="Lund B."/>
            <person name="von Gabain A."/>
            <person name="Edlund T."/>
            <person name="Ny T."/>
            <person name="Lundgren E."/>
        </authorList>
    </citation>
    <scope>NUCLEOTIDE SEQUENCE [MRNA] OF 14-189</scope>
    <scope>VARIANT ARG-184</scope>
</reference>
<reference key="8">
    <citation type="journal article" date="1992" name="J. Biol. Chem.">
        <title>Purification and characterization of multiple components of human lymphoblastoid interferon-alpha.</title>
        <authorList>
            <person name="Zoon K.C."/>
            <person name="Miller D."/>
            <person name="Bekisz J."/>
            <person name="zur Nedden D."/>
            <person name="Enterline J.C."/>
            <person name="Nguyen N.Y."/>
            <person name="Hu R.-Q."/>
        </authorList>
    </citation>
    <scope>PROTEIN SEQUENCE OF 24-62</scope>
    <scope>FUNCTION</scope>
</reference>
<reference key="9">
    <citation type="journal article" date="1998" name="Biochem. J.">
        <title>Identification of nine interferon-alpha subtypes produced by Sendai virus-induced human peripheral blood leucocytes.</title>
        <authorList>
            <person name="Nyman T.A."/>
            <person name="Toeloe H."/>
            <person name="Parkkinen J."/>
            <person name="Kalkkinen N."/>
        </authorList>
    </citation>
    <scope>PROTEIN SEQUENCE OF 24-58</scope>
</reference>
<reference key="10">
    <citation type="journal article" date="1998" name="J. Interferon Cytokine Res.">
        <title>A new allele of interferon-alpha17 gene encoding IFN-alpha17b is the major variant in human population.</title>
        <authorList>
            <person name="Hussain M."/>
            <person name="Tan T."/>
            <person name="Ni D."/>
            <person name="Gill D.S."/>
            <person name="Liao M.-J."/>
        </authorList>
    </citation>
    <scope>VARIANT ARG-184</scope>
</reference>
<keyword id="KW-0051">Antiviral defense</keyword>
<keyword id="KW-0202">Cytokine</keyword>
<keyword id="KW-0903">Direct protein sequencing</keyword>
<keyword id="KW-1015">Disulfide bond</keyword>
<keyword id="KW-1185">Reference proteome</keyword>
<keyword id="KW-0964">Secreted</keyword>
<keyword id="KW-0732">Signal</keyword>
<accession>P01571</accession>
<accession>Q14639</accession>
<accession>Q4KMT4</accession>
<accession>Q5VZ53</accession>
<accession>Q7M4Q4</accession>